<feature type="chain" id="PRO_0000288207" description="tRNA (guanine-N(7)-)-methyltransferase">
    <location>
        <begin position="1"/>
        <end position="263"/>
    </location>
</feature>
<feature type="region of interest" description="Disordered" evidence="3">
    <location>
        <begin position="1"/>
        <end position="38"/>
    </location>
</feature>
<feature type="region of interest" description="Interaction with RNA" evidence="2">
    <location>
        <begin position="172"/>
        <end position="177"/>
    </location>
</feature>
<feature type="compositionally biased region" description="Polar residues" evidence="3">
    <location>
        <begin position="1"/>
        <end position="10"/>
    </location>
</feature>
<feature type="active site" evidence="1">
    <location>
        <position position="166"/>
    </location>
</feature>
<feature type="binding site" evidence="2">
    <location>
        <position position="91"/>
    </location>
    <ligand>
        <name>S-adenosyl-L-methionine</name>
        <dbReference type="ChEBI" id="CHEBI:59789"/>
    </ligand>
</feature>
<feature type="binding site" evidence="2">
    <location>
        <position position="116"/>
    </location>
    <ligand>
        <name>S-adenosyl-L-methionine</name>
        <dbReference type="ChEBI" id="CHEBI:59789"/>
    </ligand>
</feature>
<feature type="binding site" evidence="2">
    <location>
        <position position="143"/>
    </location>
    <ligand>
        <name>S-adenosyl-L-methionine</name>
        <dbReference type="ChEBI" id="CHEBI:59789"/>
    </ligand>
</feature>
<feature type="binding site" evidence="2">
    <location>
        <position position="166"/>
    </location>
    <ligand>
        <name>S-adenosyl-L-methionine</name>
        <dbReference type="ChEBI" id="CHEBI:59789"/>
    </ligand>
</feature>
<feature type="binding site" evidence="2">
    <location>
        <position position="170"/>
    </location>
    <ligand>
        <name>substrate</name>
    </ligand>
</feature>
<feature type="binding site" evidence="2">
    <location>
        <position position="202"/>
    </location>
    <ligand>
        <name>substrate</name>
    </ligand>
</feature>
<feature type="binding site" evidence="2">
    <location>
        <begin position="240"/>
        <end position="243"/>
    </location>
    <ligand>
        <name>substrate</name>
    </ligand>
</feature>
<sequence length="263" mass="29047">MLPQDPSTEPTPADDAAPVDSAGQASAPSPADPEGVAHPRRIRSFVRRAGRTSTGQQRAIDEVGPRMMVPYAPQPLDWEATFGRKAPSILEIGFGMGETTAHIAGLRPQDNFLGCEVHEPGVGALLKLIDERGLANVRILQHDAVEVIAHMLTDDCLDGVHIYFPDPWHKKRHNKRRLVQPPLVKVLAARLKPGGYIHCATDWEEYAHQMLEVLSGEPLLENTSTAADGFAERPDYRPVTKFERRGVRLGHGVWDVVFRKRAA</sequence>
<comment type="function">
    <text evidence="2">Catalyzes the formation of N(7)-methylguanine at position 46 (m7G46) in tRNA.</text>
</comment>
<comment type="catalytic activity">
    <reaction evidence="2">
        <text>guanosine(46) in tRNA + S-adenosyl-L-methionine = N(7)-methylguanosine(46) in tRNA + S-adenosyl-L-homocysteine</text>
        <dbReference type="Rhea" id="RHEA:42708"/>
        <dbReference type="Rhea" id="RHEA-COMP:10188"/>
        <dbReference type="Rhea" id="RHEA-COMP:10189"/>
        <dbReference type="ChEBI" id="CHEBI:57856"/>
        <dbReference type="ChEBI" id="CHEBI:59789"/>
        <dbReference type="ChEBI" id="CHEBI:74269"/>
        <dbReference type="ChEBI" id="CHEBI:74480"/>
        <dbReference type="EC" id="2.1.1.33"/>
    </reaction>
</comment>
<comment type="pathway">
    <text evidence="2">tRNA modification; N(7)-methylguanine-tRNA biosynthesis.</text>
</comment>
<comment type="similarity">
    <text evidence="2">Belongs to the class I-like SAM-binding methyltransferase superfamily. TrmB family.</text>
</comment>
<dbReference type="EC" id="2.1.1.33" evidence="2"/>
<dbReference type="EMBL" id="AM260479">
    <property type="protein sequence ID" value="CAJ93946.1"/>
    <property type="molecule type" value="Genomic_DNA"/>
</dbReference>
<dbReference type="RefSeq" id="WP_011615871.1">
    <property type="nucleotide sequence ID" value="NC_008313.1"/>
</dbReference>
<dbReference type="SMR" id="Q0K7S5"/>
<dbReference type="STRING" id="381666.H16_A2870"/>
<dbReference type="KEGG" id="reh:H16_A2870"/>
<dbReference type="PATRIC" id="fig|381666.6.peg.3268"/>
<dbReference type="eggNOG" id="COG0220">
    <property type="taxonomic scope" value="Bacteria"/>
</dbReference>
<dbReference type="HOGENOM" id="CLU_050910_0_1_4"/>
<dbReference type="OrthoDB" id="9802090at2"/>
<dbReference type="UniPathway" id="UPA00989"/>
<dbReference type="Proteomes" id="UP000008210">
    <property type="component" value="Chromosome 1"/>
</dbReference>
<dbReference type="GO" id="GO:0043527">
    <property type="term" value="C:tRNA methyltransferase complex"/>
    <property type="evidence" value="ECO:0007669"/>
    <property type="project" value="TreeGrafter"/>
</dbReference>
<dbReference type="GO" id="GO:0008176">
    <property type="term" value="F:tRNA (guanine(46)-N7)-methyltransferase activity"/>
    <property type="evidence" value="ECO:0007669"/>
    <property type="project" value="UniProtKB-UniRule"/>
</dbReference>
<dbReference type="CDD" id="cd02440">
    <property type="entry name" value="AdoMet_MTases"/>
    <property type="match status" value="1"/>
</dbReference>
<dbReference type="FunFam" id="3.40.50.150:FF:000035">
    <property type="entry name" value="tRNA (guanine-N(7)-)-methyltransferase"/>
    <property type="match status" value="1"/>
</dbReference>
<dbReference type="Gene3D" id="3.40.50.150">
    <property type="entry name" value="Vaccinia Virus protein VP39"/>
    <property type="match status" value="1"/>
</dbReference>
<dbReference type="HAMAP" id="MF_01057">
    <property type="entry name" value="tRNA_methyltr_TrmB"/>
    <property type="match status" value="1"/>
</dbReference>
<dbReference type="InterPro" id="IPR029063">
    <property type="entry name" value="SAM-dependent_MTases_sf"/>
</dbReference>
<dbReference type="InterPro" id="IPR003358">
    <property type="entry name" value="tRNA_(Gua-N-7)_MeTrfase_Trmb"/>
</dbReference>
<dbReference type="InterPro" id="IPR055361">
    <property type="entry name" value="tRNA_methyltr_TrmB_bact"/>
</dbReference>
<dbReference type="NCBIfam" id="TIGR00091">
    <property type="entry name" value="tRNA (guanosine(46)-N7)-methyltransferase TrmB"/>
    <property type="match status" value="1"/>
</dbReference>
<dbReference type="PANTHER" id="PTHR23417">
    <property type="entry name" value="3-DEOXY-D-MANNO-OCTULOSONIC-ACID TRANSFERASE/TRNA GUANINE-N 7 - -METHYLTRANSFERASE"/>
    <property type="match status" value="1"/>
</dbReference>
<dbReference type="PANTHER" id="PTHR23417:SF14">
    <property type="entry name" value="PENTACOTRIPEPTIDE-REPEAT REGION OF PRORP DOMAIN-CONTAINING PROTEIN"/>
    <property type="match status" value="1"/>
</dbReference>
<dbReference type="Pfam" id="PF02390">
    <property type="entry name" value="Methyltransf_4"/>
    <property type="match status" value="1"/>
</dbReference>
<dbReference type="SUPFAM" id="SSF53335">
    <property type="entry name" value="S-adenosyl-L-methionine-dependent methyltransferases"/>
    <property type="match status" value="1"/>
</dbReference>
<dbReference type="PROSITE" id="PS51625">
    <property type="entry name" value="SAM_MT_TRMB"/>
    <property type="match status" value="1"/>
</dbReference>
<reference key="1">
    <citation type="journal article" date="2006" name="Nat. Biotechnol.">
        <title>Genome sequence of the bioplastic-producing 'Knallgas' bacterium Ralstonia eutropha H16.</title>
        <authorList>
            <person name="Pohlmann A."/>
            <person name="Fricke W.F."/>
            <person name="Reinecke F."/>
            <person name="Kusian B."/>
            <person name="Liesegang H."/>
            <person name="Cramm R."/>
            <person name="Eitinger T."/>
            <person name="Ewering C."/>
            <person name="Poetter M."/>
            <person name="Schwartz E."/>
            <person name="Strittmatter A."/>
            <person name="Voss I."/>
            <person name="Gottschalk G."/>
            <person name="Steinbuechel A."/>
            <person name="Friedrich B."/>
            <person name="Bowien B."/>
        </authorList>
    </citation>
    <scope>NUCLEOTIDE SEQUENCE [LARGE SCALE GENOMIC DNA]</scope>
    <source>
        <strain>ATCC 17699 / DSM 428 / KCTC 22496 / NCIMB 10442 / H16 / Stanier 337</strain>
    </source>
</reference>
<protein>
    <recommendedName>
        <fullName evidence="2">tRNA (guanine-N(7)-)-methyltransferase</fullName>
        <ecNumber evidence="2">2.1.1.33</ecNumber>
    </recommendedName>
    <alternativeName>
        <fullName evidence="2">tRNA (guanine(46)-N(7))-methyltransferase</fullName>
    </alternativeName>
    <alternativeName>
        <fullName evidence="2">tRNA(m7G46)-methyltransferase</fullName>
    </alternativeName>
</protein>
<evidence type="ECO:0000250" key="1"/>
<evidence type="ECO:0000255" key="2">
    <source>
        <dbReference type="HAMAP-Rule" id="MF_01057"/>
    </source>
</evidence>
<evidence type="ECO:0000256" key="3">
    <source>
        <dbReference type="SAM" id="MobiDB-lite"/>
    </source>
</evidence>
<accession>Q0K7S5</accession>
<gene>
    <name evidence="2" type="primary">trmB</name>
    <name type="ordered locus">H16_A2870</name>
</gene>
<proteinExistence type="inferred from homology"/>
<organism>
    <name type="scientific">Cupriavidus necator (strain ATCC 17699 / DSM 428 / KCTC 22496 / NCIMB 10442 / H16 / Stanier 337)</name>
    <name type="common">Ralstonia eutropha</name>
    <dbReference type="NCBI Taxonomy" id="381666"/>
    <lineage>
        <taxon>Bacteria</taxon>
        <taxon>Pseudomonadati</taxon>
        <taxon>Pseudomonadota</taxon>
        <taxon>Betaproteobacteria</taxon>
        <taxon>Burkholderiales</taxon>
        <taxon>Burkholderiaceae</taxon>
        <taxon>Cupriavidus</taxon>
    </lineage>
</organism>
<name>TRMB_CUPNH</name>
<keyword id="KW-0489">Methyltransferase</keyword>
<keyword id="KW-1185">Reference proteome</keyword>
<keyword id="KW-0949">S-adenosyl-L-methionine</keyword>
<keyword id="KW-0808">Transferase</keyword>
<keyword id="KW-0819">tRNA processing</keyword>